<dbReference type="PIR" id="A24690">
    <property type="entry name" value="A24690"/>
</dbReference>
<dbReference type="SMR" id="P07403"/>
<dbReference type="GO" id="GO:0072562">
    <property type="term" value="C:blood microparticle"/>
    <property type="evidence" value="ECO:0007669"/>
    <property type="project" value="TreeGrafter"/>
</dbReference>
<dbReference type="GO" id="GO:0031838">
    <property type="term" value="C:haptoglobin-hemoglobin complex"/>
    <property type="evidence" value="ECO:0007669"/>
    <property type="project" value="TreeGrafter"/>
</dbReference>
<dbReference type="GO" id="GO:0005833">
    <property type="term" value="C:hemoglobin complex"/>
    <property type="evidence" value="ECO:0007669"/>
    <property type="project" value="InterPro"/>
</dbReference>
<dbReference type="GO" id="GO:0031720">
    <property type="term" value="F:haptoglobin binding"/>
    <property type="evidence" value="ECO:0007669"/>
    <property type="project" value="TreeGrafter"/>
</dbReference>
<dbReference type="GO" id="GO:0020037">
    <property type="term" value="F:heme binding"/>
    <property type="evidence" value="ECO:0007669"/>
    <property type="project" value="InterPro"/>
</dbReference>
<dbReference type="GO" id="GO:0005506">
    <property type="term" value="F:iron ion binding"/>
    <property type="evidence" value="ECO:0007669"/>
    <property type="project" value="InterPro"/>
</dbReference>
<dbReference type="GO" id="GO:0043177">
    <property type="term" value="F:organic acid binding"/>
    <property type="evidence" value="ECO:0007669"/>
    <property type="project" value="TreeGrafter"/>
</dbReference>
<dbReference type="GO" id="GO:0019825">
    <property type="term" value="F:oxygen binding"/>
    <property type="evidence" value="ECO:0007669"/>
    <property type="project" value="InterPro"/>
</dbReference>
<dbReference type="GO" id="GO:0005344">
    <property type="term" value="F:oxygen carrier activity"/>
    <property type="evidence" value="ECO:0007669"/>
    <property type="project" value="UniProtKB-KW"/>
</dbReference>
<dbReference type="GO" id="GO:0004601">
    <property type="term" value="F:peroxidase activity"/>
    <property type="evidence" value="ECO:0007669"/>
    <property type="project" value="TreeGrafter"/>
</dbReference>
<dbReference type="GO" id="GO:0042744">
    <property type="term" value="P:hydrogen peroxide catabolic process"/>
    <property type="evidence" value="ECO:0007669"/>
    <property type="project" value="TreeGrafter"/>
</dbReference>
<dbReference type="CDD" id="cd08927">
    <property type="entry name" value="Hb-alpha-like"/>
    <property type="match status" value="1"/>
</dbReference>
<dbReference type="FunFam" id="1.10.490.10:FF:000002">
    <property type="entry name" value="Hemoglobin subunit alpha"/>
    <property type="match status" value="1"/>
</dbReference>
<dbReference type="Gene3D" id="1.10.490.10">
    <property type="entry name" value="Globins"/>
    <property type="match status" value="1"/>
</dbReference>
<dbReference type="InterPro" id="IPR000971">
    <property type="entry name" value="Globin"/>
</dbReference>
<dbReference type="InterPro" id="IPR009050">
    <property type="entry name" value="Globin-like_sf"/>
</dbReference>
<dbReference type="InterPro" id="IPR012292">
    <property type="entry name" value="Globin/Proto"/>
</dbReference>
<dbReference type="InterPro" id="IPR002338">
    <property type="entry name" value="Hemoglobin_a-typ"/>
</dbReference>
<dbReference type="InterPro" id="IPR050056">
    <property type="entry name" value="Hemoglobin_oxygen_transport"/>
</dbReference>
<dbReference type="InterPro" id="IPR002339">
    <property type="entry name" value="Hemoglobin_pi"/>
</dbReference>
<dbReference type="PANTHER" id="PTHR11442">
    <property type="entry name" value="HEMOGLOBIN FAMILY MEMBER"/>
    <property type="match status" value="1"/>
</dbReference>
<dbReference type="PANTHER" id="PTHR11442:SF48">
    <property type="entry name" value="HEMOGLOBIN SUBUNIT ALPHA"/>
    <property type="match status" value="1"/>
</dbReference>
<dbReference type="Pfam" id="PF00042">
    <property type="entry name" value="Globin"/>
    <property type="match status" value="1"/>
</dbReference>
<dbReference type="PRINTS" id="PR00612">
    <property type="entry name" value="ALPHAHAEM"/>
</dbReference>
<dbReference type="PRINTS" id="PR00815">
    <property type="entry name" value="PIHAEM"/>
</dbReference>
<dbReference type="SUPFAM" id="SSF46458">
    <property type="entry name" value="Globin-like"/>
    <property type="match status" value="1"/>
</dbReference>
<dbReference type="PROSITE" id="PS01033">
    <property type="entry name" value="GLOBIN"/>
    <property type="match status" value="1"/>
</dbReference>
<sequence>VLSPADKNNVKACWEKIGGHGAAYGAEALERMFLSFPTTKTYFPHFDLSHGSAQVQGHGKKVADALANAAAHVDDLPSALSALSDLHAHKLRVDPVNFKLLSHCLLVTLAAHHPAEFTPAVHASLDKFLASVSTVLTSKYR</sequence>
<name>HBA_UROTO</name>
<organism>
    <name type="scientific">Urocitellus townsendii</name>
    <name type="common">Townsend's ground squirrel</name>
    <name type="synonym">Spermophilus townsendii</name>
    <dbReference type="NCBI Taxonomy" id="99861"/>
    <lineage>
        <taxon>Eukaryota</taxon>
        <taxon>Metazoa</taxon>
        <taxon>Chordata</taxon>
        <taxon>Craniata</taxon>
        <taxon>Vertebrata</taxon>
        <taxon>Euteleostomi</taxon>
        <taxon>Mammalia</taxon>
        <taxon>Eutheria</taxon>
        <taxon>Euarchontoglires</taxon>
        <taxon>Glires</taxon>
        <taxon>Rodentia</taxon>
        <taxon>Sciuromorpha</taxon>
        <taxon>Sciuridae</taxon>
        <taxon>Xerinae</taxon>
        <taxon>Marmotini</taxon>
        <taxon>Urocitellus</taxon>
    </lineage>
</organism>
<feature type="chain" id="PRO_0000052766" description="Hemoglobin subunit alpha">
    <location>
        <begin position="1"/>
        <end position="141"/>
    </location>
</feature>
<feature type="peptide" id="PRO_0000455947" description="Hemopressin" evidence="2">
    <location>
        <begin position="95"/>
        <end position="103"/>
    </location>
</feature>
<feature type="domain" description="Globin" evidence="4">
    <location>
        <begin position="1"/>
        <end position="141"/>
    </location>
</feature>
<feature type="binding site" evidence="4">
    <location>
        <position position="58"/>
    </location>
    <ligand>
        <name>O2</name>
        <dbReference type="ChEBI" id="CHEBI:15379"/>
    </ligand>
</feature>
<feature type="binding site" description="proximal binding residue" evidence="4">
    <location>
        <position position="87"/>
    </location>
    <ligand>
        <name>heme b</name>
        <dbReference type="ChEBI" id="CHEBI:60344"/>
    </ligand>
    <ligandPart>
        <name>Fe</name>
        <dbReference type="ChEBI" id="CHEBI:18248"/>
    </ligandPart>
</feature>
<feature type="modified residue" description="Phosphoserine" evidence="3">
    <location>
        <position position="3"/>
    </location>
</feature>
<feature type="modified residue" description="N6-succinyllysine" evidence="1">
    <location>
        <position position="7"/>
    </location>
</feature>
<feature type="modified residue" description="N6-succinyllysine" evidence="1">
    <location>
        <position position="11"/>
    </location>
</feature>
<feature type="modified residue" description="N6-acetyllysine; alternate" evidence="3">
    <location>
        <position position="16"/>
    </location>
</feature>
<feature type="modified residue" description="N6-succinyllysine; alternate" evidence="1">
    <location>
        <position position="16"/>
    </location>
</feature>
<feature type="modified residue" description="Phosphotyrosine" evidence="3">
    <location>
        <position position="24"/>
    </location>
</feature>
<feature type="modified residue" description="Phosphoserine" evidence="3">
    <location>
        <position position="35"/>
    </location>
</feature>
<feature type="modified residue" description="N6-succinyllysine" evidence="1">
    <location>
        <position position="40"/>
    </location>
</feature>
<feature type="modified residue" description="Phosphoserine" evidence="3">
    <location>
        <position position="49"/>
    </location>
</feature>
<feature type="modified residue" description="Phosphoserine" evidence="1">
    <location>
        <position position="102"/>
    </location>
</feature>
<feature type="modified residue" description="Phosphothreonine" evidence="1">
    <location>
        <position position="108"/>
    </location>
</feature>
<feature type="modified residue" description="Phosphoserine" evidence="1">
    <location>
        <position position="124"/>
    </location>
</feature>
<feature type="modified residue" description="Phosphoserine" evidence="1">
    <location>
        <position position="131"/>
    </location>
</feature>
<feature type="modified residue" description="Phosphothreonine" evidence="1">
    <location>
        <position position="134"/>
    </location>
</feature>
<feature type="modified residue" description="Phosphothreonine" evidence="1">
    <location>
        <position position="137"/>
    </location>
</feature>
<feature type="modified residue" description="Phosphoserine" evidence="1">
    <location>
        <position position="138"/>
    </location>
</feature>
<evidence type="ECO:0000250" key="1">
    <source>
        <dbReference type="UniProtKB" id="P01942"/>
    </source>
</evidence>
<evidence type="ECO:0000250" key="2">
    <source>
        <dbReference type="UniProtKB" id="P01946"/>
    </source>
</evidence>
<evidence type="ECO:0000250" key="3">
    <source>
        <dbReference type="UniProtKB" id="P69905"/>
    </source>
</evidence>
<evidence type="ECO:0000255" key="4">
    <source>
        <dbReference type="PROSITE-ProRule" id="PRU00238"/>
    </source>
</evidence>
<reference key="1">
    <citation type="journal article" date="1985" name="Biol. Chem. Hoppe-Seyler">
        <title>The primary structure and functional properties of the hemoglobins of a ground squirrel (Spermophilus townsendii, Rodentia).</title>
        <authorList>
            <person name="Kleinschmidt T."/>
            <person name="Bieber F.A."/>
            <person name="Nadler C.F."/>
            <person name="Hoffmann R.S."/>
            <person name="Vida L.N."/>
            <person name="Honig G.R."/>
            <person name="Braunitzer G."/>
        </authorList>
    </citation>
    <scope>PROTEIN SEQUENCE</scope>
</reference>
<proteinExistence type="evidence at protein level"/>
<protein>
    <recommendedName>
        <fullName>Hemoglobin subunit alpha</fullName>
    </recommendedName>
    <alternativeName>
        <fullName>Alpha-globin</fullName>
    </alternativeName>
    <alternativeName>
        <fullName>Hemoglobin alpha chain</fullName>
    </alternativeName>
    <component>
        <recommendedName>
            <fullName evidence="2">Hemopressin</fullName>
        </recommendedName>
    </component>
</protein>
<comment type="function">
    <text>Involved in oxygen transport from the lung to the various peripheral tissues.</text>
</comment>
<comment type="function">
    <molecule>Hemopressin</molecule>
    <text evidence="2">Hemopressin acts as an antagonist peptide of the cannabinoid receptor CNR1. Hemopressin-binding efficiently blocks cannabinoid receptor CNR1 and subsequent signaling.</text>
</comment>
<comment type="subunit">
    <text>Heterotetramer of two alpha chains and two beta chains.</text>
</comment>
<comment type="tissue specificity">
    <text>Red blood cells.</text>
</comment>
<comment type="similarity">
    <text evidence="4">Belongs to the globin family.</text>
</comment>
<gene>
    <name type="primary">HBA</name>
</gene>
<keyword id="KW-0007">Acetylation</keyword>
<keyword id="KW-0903">Direct protein sequencing</keyword>
<keyword id="KW-0349">Heme</keyword>
<keyword id="KW-0408">Iron</keyword>
<keyword id="KW-0479">Metal-binding</keyword>
<keyword id="KW-0561">Oxygen transport</keyword>
<keyword id="KW-0597">Phosphoprotein</keyword>
<keyword id="KW-0813">Transport</keyword>
<accession>P07403</accession>